<evidence type="ECO:0000250" key="1">
    <source>
        <dbReference type="UniProtKB" id="O00567"/>
    </source>
</evidence>
<evidence type="ECO:0000250" key="2">
    <source>
        <dbReference type="UniProtKB" id="Q12460"/>
    </source>
</evidence>
<evidence type="ECO:0000255" key="3">
    <source>
        <dbReference type="PROSITE-ProRule" id="PRU00690"/>
    </source>
</evidence>
<evidence type="ECO:0000256" key="4">
    <source>
        <dbReference type="SAM" id="MobiDB-lite"/>
    </source>
</evidence>
<evidence type="ECO:0000305" key="5"/>
<evidence type="ECO:0000312" key="6">
    <source>
        <dbReference type="WormBase" id="K07C5.4"/>
    </source>
</evidence>
<keyword id="KW-0539">Nucleus</keyword>
<keyword id="KW-1185">Reference proteome</keyword>
<keyword id="KW-0690">Ribosome biogenesis</keyword>
<comment type="function">
    <text evidence="2">Required for 60S ribosomal subunit synthesis.</text>
</comment>
<comment type="subcellular location">
    <subcellularLocation>
        <location evidence="1">Nucleus</location>
        <location evidence="1">Nucleolus</location>
    </subcellularLocation>
</comment>
<comment type="similarity">
    <text evidence="5">Belongs to the NOP5/NOP56 family.</text>
</comment>
<name>NOP56_CAEEL</name>
<dbReference type="EMBL" id="BX284605">
    <property type="protein sequence ID" value="CAA94897.1"/>
    <property type="molecule type" value="Genomic_DNA"/>
</dbReference>
<dbReference type="PIR" id="T23405">
    <property type="entry name" value="T23405"/>
</dbReference>
<dbReference type="RefSeq" id="NP_505660.1">
    <property type="nucleotide sequence ID" value="NM_073259.11"/>
</dbReference>
<dbReference type="SMR" id="Q21276"/>
<dbReference type="BioGRID" id="44472">
    <property type="interactions" value="14"/>
</dbReference>
<dbReference type="FunCoup" id="Q21276">
    <property type="interactions" value="2848"/>
</dbReference>
<dbReference type="STRING" id="6239.K07C5.4.1"/>
<dbReference type="PaxDb" id="6239-K07C5.4"/>
<dbReference type="PeptideAtlas" id="Q21276"/>
<dbReference type="EnsemblMetazoa" id="K07C5.4.1">
    <property type="protein sequence ID" value="K07C5.4.1"/>
    <property type="gene ID" value="WBGene00010627"/>
</dbReference>
<dbReference type="GeneID" id="179442"/>
<dbReference type="KEGG" id="cel:CELE_K07C5.4"/>
<dbReference type="UCSC" id="K07C5.4">
    <property type="organism name" value="c. elegans"/>
</dbReference>
<dbReference type="AGR" id="WB:WBGene00010627"/>
<dbReference type="CTD" id="179442"/>
<dbReference type="WormBase" id="K07C5.4">
    <property type="protein sequence ID" value="CE06114"/>
    <property type="gene ID" value="WBGene00010627"/>
    <property type="gene designation" value="nol-56"/>
</dbReference>
<dbReference type="eggNOG" id="KOG2573">
    <property type="taxonomic scope" value="Eukaryota"/>
</dbReference>
<dbReference type="GeneTree" id="ENSGT00940000153534"/>
<dbReference type="HOGENOM" id="CLU_015495_4_0_1"/>
<dbReference type="InParanoid" id="Q21276"/>
<dbReference type="OMA" id="PDNYMFA"/>
<dbReference type="OrthoDB" id="6780543at2759"/>
<dbReference type="PhylomeDB" id="Q21276"/>
<dbReference type="Reactome" id="R-CEL-6791226">
    <property type="pathway name" value="Major pathway of rRNA processing in the nucleolus and cytosol"/>
</dbReference>
<dbReference type="PRO" id="PR:Q21276"/>
<dbReference type="Proteomes" id="UP000001940">
    <property type="component" value="Chromosome V"/>
</dbReference>
<dbReference type="Bgee" id="WBGene00010627">
    <property type="expression patterns" value="Expressed in adult organism and 3 other cell types or tissues"/>
</dbReference>
<dbReference type="GO" id="GO:0031428">
    <property type="term" value="C:box C/D methylation guide snoRNP complex"/>
    <property type="evidence" value="ECO:0000318"/>
    <property type="project" value="GO_Central"/>
</dbReference>
<dbReference type="GO" id="GO:0005730">
    <property type="term" value="C:nucleolus"/>
    <property type="evidence" value="ECO:0007669"/>
    <property type="project" value="UniProtKB-SubCell"/>
</dbReference>
<dbReference type="GO" id="GO:0032040">
    <property type="term" value="C:small-subunit processome"/>
    <property type="evidence" value="ECO:0000318"/>
    <property type="project" value="GO_Central"/>
</dbReference>
<dbReference type="GO" id="GO:0030515">
    <property type="term" value="F:snoRNA binding"/>
    <property type="evidence" value="ECO:0000318"/>
    <property type="project" value="GO_Central"/>
</dbReference>
<dbReference type="GO" id="GO:0042254">
    <property type="term" value="P:ribosome biogenesis"/>
    <property type="evidence" value="ECO:0007669"/>
    <property type="project" value="UniProtKB-KW"/>
</dbReference>
<dbReference type="FunFam" id="1.10.246.90:FF:000001">
    <property type="entry name" value="Nucleolar protein 56"/>
    <property type="match status" value="1"/>
</dbReference>
<dbReference type="FunFam" id="1.10.287.4070:FF:000004">
    <property type="entry name" value="Nucleolar protein 56"/>
    <property type="match status" value="1"/>
</dbReference>
<dbReference type="Gene3D" id="1.10.287.4070">
    <property type="match status" value="1"/>
</dbReference>
<dbReference type="Gene3D" id="1.10.246.90">
    <property type="entry name" value="Nop domain"/>
    <property type="match status" value="1"/>
</dbReference>
<dbReference type="InterPro" id="IPR045056">
    <property type="entry name" value="Nop56/Nop58"/>
</dbReference>
<dbReference type="InterPro" id="IPR012974">
    <property type="entry name" value="NOP58/56_N"/>
</dbReference>
<dbReference type="InterPro" id="IPR042239">
    <property type="entry name" value="Nop_C"/>
</dbReference>
<dbReference type="InterPro" id="IPR002687">
    <property type="entry name" value="Nop_dom"/>
</dbReference>
<dbReference type="InterPro" id="IPR036070">
    <property type="entry name" value="Nop_dom_sf"/>
</dbReference>
<dbReference type="InterPro" id="IPR012976">
    <property type="entry name" value="NOSIC"/>
</dbReference>
<dbReference type="PANTHER" id="PTHR10894">
    <property type="entry name" value="NUCLEOLAR PROTEIN 5 NUCLEOLAR PROTEIN NOP5 NOP58"/>
    <property type="match status" value="1"/>
</dbReference>
<dbReference type="PANTHER" id="PTHR10894:SF0">
    <property type="entry name" value="NUCLEOLAR PROTEIN 56"/>
    <property type="match status" value="1"/>
</dbReference>
<dbReference type="Pfam" id="PF01798">
    <property type="entry name" value="Nop"/>
    <property type="match status" value="1"/>
</dbReference>
<dbReference type="Pfam" id="PF08156">
    <property type="entry name" value="NOP5NT"/>
    <property type="match status" value="1"/>
</dbReference>
<dbReference type="SMART" id="SM00931">
    <property type="entry name" value="NOSIC"/>
    <property type="match status" value="1"/>
</dbReference>
<dbReference type="SUPFAM" id="SSF89124">
    <property type="entry name" value="Nop domain"/>
    <property type="match status" value="1"/>
</dbReference>
<dbReference type="PROSITE" id="PS51358">
    <property type="entry name" value="NOP"/>
    <property type="match status" value="1"/>
</dbReference>
<protein>
    <recommendedName>
        <fullName evidence="6">Nucleolar protein 56</fullName>
    </recommendedName>
</protein>
<accession>Q21276</accession>
<proteinExistence type="inferred from homology"/>
<reference key="1">
    <citation type="journal article" date="1998" name="Science">
        <title>Genome sequence of the nematode C. elegans: a platform for investigating biology.</title>
        <authorList>
            <consortium name="The C. elegans sequencing consortium"/>
        </authorList>
    </citation>
    <scope>NUCLEOTIDE SEQUENCE [LARGE SCALE GENOMIC DNA]</scope>
    <source>
        <strain>Bristol N2</strain>
    </source>
</reference>
<gene>
    <name evidence="6" type="primary">nol-56</name>
    <name evidence="6" type="ORF">K07C5.4</name>
</gene>
<sequence length="486" mass="54511">MSEVPHFVLYEHAAGYALMKIKEFDDAGLILQEVDAAHADGYKFSQIVELASFDPFKNTEAALENCNSISEGLAHPDLTNFLQKSLPKKKKHVVLGINDSKLAGSLTEAFPDLKLVFGGVITEILRGTRVHFERLAKNLPHHSLSKAQLSLGHSYSRSKVKFDVHRVDNMVIQSIALLDQLDKDINLFGMRIREWYSYHYPELFRLAPDQYKYSRLAVAILDRNKMAENENLENEILEILDNDSEKTAQIIEAARTSMGMDISDLDLENIKRFAARVSSLMEYRQQLHEYIKDRMDHCAPSLSALIGEQVGARLISHAGSLTNLAKYPASTVQILGAEKALFRALKTRSNTPKYGLLFHSSFIGKAGTKNKGRVSRYLANKCSIAARVDCFSETPVSTYGEFLRQQVEDRLEYFTSGTVPKKNIDVMKEAEEAAVEVKEKVIKKKKKAAKKAKRLAEESVTATAEAEVDEDAPKPKKKKKSKAGDE</sequence>
<feature type="chain" id="PRO_0000219033" description="Nucleolar protein 56">
    <location>
        <begin position="1"/>
        <end position="486"/>
    </location>
</feature>
<feature type="domain" description="Nop" evidence="3">
    <location>
        <begin position="298"/>
        <end position="416"/>
    </location>
</feature>
<feature type="region of interest" description="Disordered" evidence="4">
    <location>
        <begin position="450"/>
        <end position="486"/>
    </location>
</feature>
<feature type="compositionally biased region" description="Basic residues" evidence="4">
    <location>
        <begin position="475"/>
        <end position="486"/>
    </location>
</feature>
<organism>
    <name type="scientific">Caenorhabditis elegans</name>
    <dbReference type="NCBI Taxonomy" id="6239"/>
    <lineage>
        <taxon>Eukaryota</taxon>
        <taxon>Metazoa</taxon>
        <taxon>Ecdysozoa</taxon>
        <taxon>Nematoda</taxon>
        <taxon>Chromadorea</taxon>
        <taxon>Rhabditida</taxon>
        <taxon>Rhabditina</taxon>
        <taxon>Rhabditomorpha</taxon>
        <taxon>Rhabditoidea</taxon>
        <taxon>Rhabditidae</taxon>
        <taxon>Peloderinae</taxon>
        <taxon>Caenorhabditis</taxon>
    </lineage>
</organism>